<sequence>MAETTKIFESHLVKQALKDSVLKLYPVYMIKNPIMFVVEVGMLLALGLTIYPDLFHQESVSRLYVFSIFIILLLTLVFANFSEALAEGRGKAQANALRQTQTEMKARRIKQDGSYEMIDASDLKKGHIVRVATGEQIPNDGKVIKGLATVDESAITGESAPVIKESGGDFDNVIGGTSVASDWLEVEITSEPGHSFLDKMIGLVEGATRKKTPNEIALFTLLMTLTIIFLVVILTMYPLAKFLNFNLSIAMLIALAVCLIPTTIGGLLSAIGIAGMDRVTQFNILAKSGRSVETCGDVNVLILDKTGTITYGNRMADAFIPVKSSSFERLVKAAYESSIADDTPEGRSIVKLAYKQHIDLPQEVGEYIPFTAETRMSGVKFTTREVYKGAPNSMVKRVKEAGGHIPVDLDALVKGVSKKGGTPLVVLEDNEILGVIYLKDVIKDGLVERFRELREMGIETVMCTGDNELTAATIAKEAGVDRFVAECKPEDKINVIREEQAKGHIVAMTGDGTNDAPALAEANVGLAMNSGTMSAKEAANLIDLDSNPTKLMEVVLIGKQLLMTRGSLTTFSIANDIAKYFAILPAMFMAAMPAMNHLNIMHLHSPESAVLSALIFNALIIVLLIPIAMKGVKFKGASTQTILMKNMLVYGLGGMIVPFIGIKLIDLIIQLFV</sequence>
<protein>
    <recommendedName>
        <fullName evidence="1">Potassium-transporting ATPase ATP-binding subunit 1</fullName>
        <ecNumber evidence="1">7.2.2.6</ecNumber>
    </recommendedName>
    <alternativeName>
        <fullName evidence="1">ATP phosphohydrolase [potassium-transporting] B chain 1</fullName>
    </alternativeName>
    <alternativeName>
        <fullName evidence="1">Potassium-binding and translocating subunit B 1</fullName>
    </alternativeName>
    <alternativeName>
        <fullName evidence="1">Potassium-translocating ATPase B chain 1</fullName>
    </alternativeName>
</protein>
<dbReference type="EC" id="7.2.2.6" evidence="1"/>
<dbReference type="EMBL" id="BA000017">
    <property type="protein sequence ID" value="BAB56235.1"/>
    <property type="molecule type" value="Genomic_DNA"/>
</dbReference>
<dbReference type="RefSeq" id="WP_000852430.1">
    <property type="nucleotide sequence ID" value="NC_002758.2"/>
</dbReference>
<dbReference type="SMR" id="P0A007"/>
<dbReference type="KEGG" id="sav:SAV0073"/>
<dbReference type="HOGENOM" id="CLU_025728_2_0_9"/>
<dbReference type="PhylomeDB" id="P0A007"/>
<dbReference type="Proteomes" id="UP000002481">
    <property type="component" value="Chromosome"/>
</dbReference>
<dbReference type="GO" id="GO:0005886">
    <property type="term" value="C:plasma membrane"/>
    <property type="evidence" value="ECO:0007669"/>
    <property type="project" value="UniProtKB-SubCell"/>
</dbReference>
<dbReference type="GO" id="GO:0005524">
    <property type="term" value="F:ATP binding"/>
    <property type="evidence" value="ECO:0007669"/>
    <property type="project" value="UniProtKB-UniRule"/>
</dbReference>
<dbReference type="GO" id="GO:0016887">
    <property type="term" value="F:ATP hydrolysis activity"/>
    <property type="evidence" value="ECO:0007669"/>
    <property type="project" value="InterPro"/>
</dbReference>
<dbReference type="GO" id="GO:0000287">
    <property type="term" value="F:magnesium ion binding"/>
    <property type="evidence" value="ECO:0007669"/>
    <property type="project" value="UniProtKB-UniRule"/>
</dbReference>
<dbReference type="GO" id="GO:0008556">
    <property type="term" value="F:P-type potassium transmembrane transporter activity"/>
    <property type="evidence" value="ECO:0007669"/>
    <property type="project" value="UniProtKB-UniRule"/>
</dbReference>
<dbReference type="FunFam" id="2.70.150.10:FF:000010">
    <property type="entry name" value="Potassium-transporting ATPase ATP-binding subunit"/>
    <property type="match status" value="1"/>
</dbReference>
<dbReference type="FunFam" id="3.40.1110.10:FF:000007">
    <property type="entry name" value="Potassium-transporting ATPase ATP-binding subunit"/>
    <property type="match status" value="1"/>
</dbReference>
<dbReference type="Gene3D" id="3.40.1110.10">
    <property type="entry name" value="Calcium-transporting ATPase, cytoplasmic domain N"/>
    <property type="match status" value="1"/>
</dbReference>
<dbReference type="Gene3D" id="2.70.150.10">
    <property type="entry name" value="Calcium-transporting ATPase, cytoplasmic transduction domain A"/>
    <property type="match status" value="1"/>
</dbReference>
<dbReference type="Gene3D" id="3.40.50.1000">
    <property type="entry name" value="HAD superfamily/HAD-like"/>
    <property type="match status" value="1"/>
</dbReference>
<dbReference type="HAMAP" id="MF_00285">
    <property type="entry name" value="KdpB"/>
    <property type="match status" value="1"/>
</dbReference>
<dbReference type="InterPro" id="IPR023299">
    <property type="entry name" value="ATPase_P-typ_cyto_dom_N"/>
</dbReference>
<dbReference type="InterPro" id="IPR018303">
    <property type="entry name" value="ATPase_P-typ_P_site"/>
</dbReference>
<dbReference type="InterPro" id="IPR023298">
    <property type="entry name" value="ATPase_P-typ_TM_dom_sf"/>
</dbReference>
<dbReference type="InterPro" id="IPR008250">
    <property type="entry name" value="ATPase_P-typ_transduc_dom_A_sf"/>
</dbReference>
<dbReference type="InterPro" id="IPR036412">
    <property type="entry name" value="HAD-like_sf"/>
</dbReference>
<dbReference type="InterPro" id="IPR023214">
    <property type="entry name" value="HAD_sf"/>
</dbReference>
<dbReference type="InterPro" id="IPR006391">
    <property type="entry name" value="P-type_ATPase_bsu_IA"/>
</dbReference>
<dbReference type="InterPro" id="IPR001757">
    <property type="entry name" value="P_typ_ATPase"/>
</dbReference>
<dbReference type="InterPro" id="IPR044492">
    <property type="entry name" value="P_typ_ATPase_HD_dom"/>
</dbReference>
<dbReference type="NCBIfam" id="TIGR01494">
    <property type="entry name" value="ATPase_P-type"/>
    <property type="match status" value="1"/>
</dbReference>
<dbReference type="NCBIfam" id="TIGR01497">
    <property type="entry name" value="kdpB"/>
    <property type="match status" value="1"/>
</dbReference>
<dbReference type="NCBIfam" id="NF010609">
    <property type="entry name" value="PRK14010.1"/>
    <property type="match status" value="1"/>
</dbReference>
<dbReference type="PANTHER" id="PTHR43743">
    <property type="entry name" value="POTASSIUM-TRANSPORTING ATPASE ATP-BINDING SUBUNIT"/>
    <property type="match status" value="1"/>
</dbReference>
<dbReference type="PANTHER" id="PTHR43743:SF1">
    <property type="entry name" value="POTASSIUM-TRANSPORTING ATPASE ATP-BINDING SUBUNIT"/>
    <property type="match status" value="1"/>
</dbReference>
<dbReference type="Pfam" id="PF00122">
    <property type="entry name" value="E1-E2_ATPase"/>
    <property type="match status" value="1"/>
</dbReference>
<dbReference type="Pfam" id="PF00702">
    <property type="entry name" value="Hydrolase"/>
    <property type="match status" value="1"/>
</dbReference>
<dbReference type="PRINTS" id="PR00119">
    <property type="entry name" value="CATATPASE"/>
</dbReference>
<dbReference type="SFLD" id="SFLDG00002">
    <property type="entry name" value="C1.7:_P-type_atpase_like"/>
    <property type="match status" value="1"/>
</dbReference>
<dbReference type="SFLD" id="SFLDF00027">
    <property type="entry name" value="p-type_atpase"/>
    <property type="match status" value="1"/>
</dbReference>
<dbReference type="SUPFAM" id="SSF81653">
    <property type="entry name" value="Calcium ATPase, transduction domain A"/>
    <property type="match status" value="1"/>
</dbReference>
<dbReference type="SUPFAM" id="SSF81665">
    <property type="entry name" value="Calcium ATPase, transmembrane domain M"/>
    <property type="match status" value="1"/>
</dbReference>
<dbReference type="SUPFAM" id="SSF56784">
    <property type="entry name" value="HAD-like"/>
    <property type="match status" value="1"/>
</dbReference>
<dbReference type="PROSITE" id="PS00154">
    <property type="entry name" value="ATPASE_E1_E2"/>
    <property type="match status" value="1"/>
</dbReference>
<proteinExistence type="inferred from homology"/>
<comment type="function">
    <text evidence="1">Part of the high-affinity ATP-driven potassium transport (or Kdp) system, which catalyzes the hydrolysis of ATP coupled with the electrogenic transport of potassium into the cytoplasm. This subunit is responsible for energy coupling to the transport system and for the release of the potassium ions to the cytoplasm.</text>
</comment>
<comment type="catalytic activity">
    <reaction evidence="1">
        <text>K(+)(out) + ATP + H2O = K(+)(in) + ADP + phosphate + H(+)</text>
        <dbReference type="Rhea" id="RHEA:16777"/>
        <dbReference type="ChEBI" id="CHEBI:15377"/>
        <dbReference type="ChEBI" id="CHEBI:15378"/>
        <dbReference type="ChEBI" id="CHEBI:29103"/>
        <dbReference type="ChEBI" id="CHEBI:30616"/>
        <dbReference type="ChEBI" id="CHEBI:43474"/>
        <dbReference type="ChEBI" id="CHEBI:456216"/>
        <dbReference type="EC" id="7.2.2.6"/>
    </reaction>
    <physiologicalReaction direction="left-to-right" evidence="1">
        <dbReference type="Rhea" id="RHEA:16778"/>
    </physiologicalReaction>
</comment>
<comment type="subunit">
    <text evidence="1">The system is composed of three essential subunits: KdpA, KdpB and KdpC.</text>
</comment>
<comment type="subcellular location">
    <subcellularLocation>
        <location evidence="1">Cell membrane</location>
        <topology evidence="1">Multi-pass membrane protein</topology>
    </subcellularLocation>
</comment>
<comment type="similarity">
    <text evidence="1">Belongs to the cation transport ATPase (P-type) (TC 3.A.3) family. Type IA subfamily.</text>
</comment>
<name>KDPB1_STAAM</name>
<gene>
    <name evidence="1" type="primary">kdpB1</name>
    <name type="ordered locus">SAV0073</name>
</gene>
<reference key="1">
    <citation type="journal article" date="2001" name="Lancet">
        <title>Whole genome sequencing of meticillin-resistant Staphylococcus aureus.</title>
        <authorList>
            <person name="Kuroda M."/>
            <person name="Ohta T."/>
            <person name="Uchiyama I."/>
            <person name="Baba T."/>
            <person name="Yuzawa H."/>
            <person name="Kobayashi I."/>
            <person name="Cui L."/>
            <person name="Oguchi A."/>
            <person name="Aoki K."/>
            <person name="Nagai Y."/>
            <person name="Lian J.-Q."/>
            <person name="Ito T."/>
            <person name="Kanamori M."/>
            <person name="Matsumaru H."/>
            <person name="Maruyama A."/>
            <person name="Murakami H."/>
            <person name="Hosoyama A."/>
            <person name="Mizutani-Ui Y."/>
            <person name="Takahashi N.K."/>
            <person name="Sawano T."/>
            <person name="Inoue R."/>
            <person name="Kaito C."/>
            <person name="Sekimizu K."/>
            <person name="Hirakawa H."/>
            <person name="Kuhara S."/>
            <person name="Goto S."/>
            <person name="Yabuzaki J."/>
            <person name="Kanehisa M."/>
            <person name="Yamashita A."/>
            <person name="Oshima K."/>
            <person name="Furuya K."/>
            <person name="Yoshino C."/>
            <person name="Shiba T."/>
            <person name="Hattori M."/>
            <person name="Ogasawara N."/>
            <person name="Hayashi H."/>
            <person name="Hiramatsu K."/>
        </authorList>
    </citation>
    <scope>NUCLEOTIDE SEQUENCE [LARGE SCALE GENOMIC DNA]</scope>
    <source>
        <strain>Mu50 / ATCC 700699</strain>
    </source>
</reference>
<feature type="chain" id="PRO_0000046135" description="Potassium-transporting ATPase ATP-binding subunit 1">
    <location>
        <begin position="1"/>
        <end position="673"/>
    </location>
</feature>
<feature type="transmembrane region" description="Helical" evidence="1">
    <location>
        <begin position="34"/>
        <end position="54"/>
    </location>
</feature>
<feature type="transmembrane region" description="Helical" evidence="1">
    <location>
        <begin position="65"/>
        <end position="85"/>
    </location>
</feature>
<feature type="transmembrane region" description="Helical" evidence="1">
    <location>
        <begin position="216"/>
        <end position="236"/>
    </location>
</feature>
<feature type="transmembrane region" description="Helical" evidence="1">
    <location>
        <begin position="253"/>
        <end position="273"/>
    </location>
</feature>
<feature type="transmembrane region" description="Helical" evidence="1">
    <location>
        <begin position="581"/>
        <end position="601"/>
    </location>
</feature>
<feature type="transmembrane region" description="Helical" evidence="1">
    <location>
        <begin position="609"/>
        <end position="629"/>
    </location>
</feature>
<feature type="transmembrane region" description="Helical" evidence="1">
    <location>
        <begin position="649"/>
        <end position="669"/>
    </location>
</feature>
<feature type="active site" description="4-aspartylphosphate intermediate" evidence="1">
    <location>
        <position position="304"/>
    </location>
</feature>
<feature type="binding site" evidence="1">
    <location>
        <position position="341"/>
    </location>
    <ligand>
        <name>ATP</name>
        <dbReference type="ChEBI" id="CHEBI:30616"/>
    </ligand>
</feature>
<feature type="binding site" evidence="1">
    <location>
        <position position="345"/>
    </location>
    <ligand>
        <name>ATP</name>
        <dbReference type="ChEBI" id="CHEBI:30616"/>
    </ligand>
</feature>
<feature type="binding site" evidence="1">
    <location>
        <begin position="370"/>
        <end position="377"/>
    </location>
    <ligand>
        <name>ATP</name>
        <dbReference type="ChEBI" id="CHEBI:30616"/>
    </ligand>
</feature>
<feature type="binding site" evidence="1">
    <location>
        <position position="388"/>
    </location>
    <ligand>
        <name>ATP</name>
        <dbReference type="ChEBI" id="CHEBI:30616"/>
    </ligand>
</feature>
<feature type="binding site" evidence="1">
    <location>
        <position position="511"/>
    </location>
    <ligand>
        <name>Mg(2+)</name>
        <dbReference type="ChEBI" id="CHEBI:18420"/>
    </ligand>
</feature>
<feature type="binding site" evidence="1">
    <location>
        <position position="515"/>
    </location>
    <ligand>
        <name>Mg(2+)</name>
        <dbReference type="ChEBI" id="CHEBI:18420"/>
    </ligand>
</feature>
<keyword id="KW-0067">ATP-binding</keyword>
<keyword id="KW-1003">Cell membrane</keyword>
<keyword id="KW-0406">Ion transport</keyword>
<keyword id="KW-0460">Magnesium</keyword>
<keyword id="KW-0472">Membrane</keyword>
<keyword id="KW-0479">Metal-binding</keyword>
<keyword id="KW-0547">Nucleotide-binding</keyword>
<keyword id="KW-0597">Phosphoprotein</keyword>
<keyword id="KW-0630">Potassium</keyword>
<keyword id="KW-0633">Potassium transport</keyword>
<keyword id="KW-1278">Translocase</keyword>
<keyword id="KW-0812">Transmembrane</keyword>
<keyword id="KW-1133">Transmembrane helix</keyword>
<keyword id="KW-0813">Transport</keyword>
<organism>
    <name type="scientific">Staphylococcus aureus (strain Mu50 / ATCC 700699)</name>
    <dbReference type="NCBI Taxonomy" id="158878"/>
    <lineage>
        <taxon>Bacteria</taxon>
        <taxon>Bacillati</taxon>
        <taxon>Bacillota</taxon>
        <taxon>Bacilli</taxon>
        <taxon>Bacillales</taxon>
        <taxon>Staphylococcaceae</taxon>
        <taxon>Staphylococcus</taxon>
    </lineage>
</organism>
<evidence type="ECO:0000255" key="1">
    <source>
        <dbReference type="HAMAP-Rule" id="MF_00285"/>
    </source>
</evidence>
<accession>P0A007</accession>
<accession>Q9XBA9</accession>